<keyword id="KW-1185">Reference proteome</keyword>
<proteinExistence type="predicted"/>
<organism>
    <name type="scientific">Mycobacterium bovis (strain ATCC BAA-935 / AF2122/97)</name>
    <dbReference type="NCBI Taxonomy" id="233413"/>
    <lineage>
        <taxon>Bacteria</taxon>
        <taxon>Bacillati</taxon>
        <taxon>Actinomycetota</taxon>
        <taxon>Actinomycetes</taxon>
        <taxon>Mycobacteriales</taxon>
        <taxon>Mycobacteriaceae</taxon>
        <taxon>Mycobacterium</taxon>
        <taxon>Mycobacterium tuberculosis complex</taxon>
    </lineage>
</organism>
<accession>P64888</accession>
<accession>A0A1R3XZ66</accession>
<accession>P71996</accession>
<accession>X2BJ31</accession>
<sequence>MCGDQSDHVLQHWTVDISIDEHEGLTRAKARLRWREKELVGVGLARLNPADRNVPEIGDELSVARALSDLGKRMLKVSTHDIEAVTHQPARLLY</sequence>
<feature type="chain" id="PRO_0000103897" description="Uncharacterized protein Mb1767">
    <location>
        <begin position="1"/>
        <end position="94"/>
    </location>
</feature>
<dbReference type="EMBL" id="LT708304">
    <property type="protein sequence ID" value="SIU00370.1"/>
    <property type="molecule type" value="Genomic_DNA"/>
</dbReference>
<dbReference type="RefSeq" id="NP_855419.1">
    <property type="nucleotide sequence ID" value="NC_002945.3"/>
</dbReference>
<dbReference type="RefSeq" id="WP_003408522.1">
    <property type="nucleotide sequence ID" value="NC_002945.4"/>
</dbReference>
<dbReference type="SMR" id="P64888"/>
<dbReference type="KEGG" id="mbo:BQ2027_MB1767"/>
<dbReference type="PATRIC" id="fig|233413.5.peg.1930"/>
<dbReference type="Proteomes" id="UP000001419">
    <property type="component" value="Chromosome"/>
</dbReference>
<dbReference type="FunFam" id="3.30.160.240:FF:000001">
    <property type="entry name" value="DUF1876 domain-containing protein"/>
    <property type="match status" value="1"/>
</dbReference>
<dbReference type="Gene3D" id="3.30.160.240">
    <property type="entry name" value="Rv1738"/>
    <property type="match status" value="1"/>
</dbReference>
<dbReference type="InterPro" id="IPR015057">
    <property type="entry name" value="Rv2632c-like"/>
</dbReference>
<dbReference type="InterPro" id="IPR038070">
    <property type="entry name" value="Rv2632c-like_sf"/>
</dbReference>
<dbReference type="Pfam" id="PF08962">
    <property type="entry name" value="Rv2632c-like"/>
    <property type="match status" value="1"/>
</dbReference>
<dbReference type="SUPFAM" id="SSF143212">
    <property type="entry name" value="Rv2632c-like"/>
    <property type="match status" value="1"/>
</dbReference>
<reference key="1">
    <citation type="journal article" date="2003" name="Proc. Natl. Acad. Sci. U.S.A.">
        <title>The complete genome sequence of Mycobacterium bovis.</title>
        <authorList>
            <person name="Garnier T."/>
            <person name="Eiglmeier K."/>
            <person name="Camus J.-C."/>
            <person name="Medina N."/>
            <person name="Mansoor H."/>
            <person name="Pryor M."/>
            <person name="Duthoy S."/>
            <person name="Grondin S."/>
            <person name="Lacroix C."/>
            <person name="Monsempe C."/>
            <person name="Simon S."/>
            <person name="Harris B."/>
            <person name="Atkin R."/>
            <person name="Doggett J."/>
            <person name="Mayes R."/>
            <person name="Keating L."/>
            <person name="Wheeler P.R."/>
            <person name="Parkhill J."/>
            <person name="Barrell B.G."/>
            <person name="Cole S.T."/>
            <person name="Gordon S.V."/>
            <person name="Hewinson R.G."/>
        </authorList>
    </citation>
    <scope>NUCLEOTIDE SEQUENCE [LARGE SCALE GENOMIC DNA]</scope>
    <source>
        <strain>ATCC BAA-935 / AF2122/97</strain>
    </source>
</reference>
<reference key="2">
    <citation type="journal article" date="2017" name="Genome Announc.">
        <title>Updated reference genome sequence and annotation of Mycobacterium bovis AF2122/97.</title>
        <authorList>
            <person name="Malone K.M."/>
            <person name="Farrell D."/>
            <person name="Stuber T.P."/>
            <person name="Schubert O.T."/>
            <person name="Aebersold R."/>
            <person name="Robbe-Austerman S."/>
            <person name="Gordon S.V."/>
        </authorList>
    </citation>
    <scope>NUCLEOTIDE SEQUENCE [LARGE SCALE GENOMIC DNA]</scope>
    <scope>GENOME REANNOTATION</scope>
    <source>
        <strain>ATCC BAA-935 / AF2122/97</strain>
    </source>
</reference>
<evidence type="ECO:0000305" key="1"/>
<protein>
    <recommendedName>
        <fullName>Uncharacterized protein Mb1767</fullName>
    </recommendedName>
</protein>
<name>Y1767_MYCBO</name>
<comment type="similarity">
    <text evidence="1">To M.tuberculosis Rv2632c.</text>
</comment>
<gene>
    <name type="ordered locus">BQ2027_MB1767</name>
</gene>